<gene>
    <name type="primary">Ppargc1b</name>
    <name type="synonym">Perc</name>
    <name type="synonym">Pgc1</name>
    <name type="synonym">Pgc1b</name>
    <name type="synonym">Ppargc1</name>
</gene>
<dbReference type="EMBL" id="AY188951">
    <property type="protein sequence ID" value="AAO40026.1"/>
    <property type="molecule type" value="mRNA"/>
</dbReference>
<dbReference type="EMBL" id="AABR03110123">
    <property type="status" value="NOT_ANNOTATED_CDS"/>
    <property type="molecule type" value="Genomic_DNA"/>
</dbReference>
<dbReference type="EMBL" id="AABR03000001">
    <property type="status" value="NOT_ANNOTATED_CDS"/>
    <property type="molecule type" value="Genomic_DNA"/>
</dbReference>
<dbReference type="RefSeq" id="NP_788264.2">
    <molecule id="Q811R2-1"/>
    <property type="nucleotide sequence ID" value="NM_176075.3"/>
</dbReference>
<dbReference type="SMR" id="Q811R2"/>
<dbReference type="FunCoup" id="Q811R2">
    <property type="interactions" value="412"/>
</dbReference>
<dbReference type="STRING" id="10116.ENSRNOP00000023661"/>
<dbReference type="GlyGen" id="Q811R2">
    <property type="glycosylation" value="1 site"/>
</dbReference>
<dbReference type="PhosphoSitePlus" id="Q811R2"/>
<dbReference type="PaxDb" id="10116-ENSRNOP00000023661"/>
<dbReference type="Ensembl" id="ENSRNOT00000023661.6">
    <molecule id="Q811R2-1"/>
    <property type="protein sequence ID" value="ENSRNOP00000023661.3"/>
    <property type="gene ID" value="ENSRNOG00000017503.8"/>
</dbReference>
<dbReference type="GeneID" id="291567"/>
<dbReference type="KEGG" id="rno:291567"/>
<dbReference type="UCSC" id="RGD:727948">
    <molecule id="Q811R2-1"/>
    <property type="organism name" value="rat"/>
</dbReference>
<dbReference type="AGR" id="RGD:727948"/>
<dbReference type="CTD" id="133522"/>
<dbReference type="RGD" id="727948">
    <property type="gene designation" value="Ppargc1b"/>
</dbReference>
<dbReference type="eggNOG" id="ENOG502QTA7">
    <property type="taxonomic scope" value="Eukaryota"/>
</dbReference>
<dbReference type="GeneTree" id="ENSGT00950000183137"/>
<dbReference type="HOGENOM" id="CLU_014202_0_0_1"/>
<dbReference type="InParanoid" id="Q811R2"/>
<dbReference type="PhylomeDB" id="Q811R2"/>
<dbReference type="TreeFam" id="TF343068"/>
<dbReference type="Reactome" id="R-RNO-9841922">
    <property type="pathway name" value="MLL4 and MLL3 complexes regulate expression of PPARG target genes in adipogenesis and hepatic steatosis"/>
</dbReference>
<dbReference type="PRO" id="PR:Q811R2"/>
<dbReference type="Proteomes" id="UP000002494">
    <property type="component" value="Chromosome 18"/>
</dbReference>
<dbReference type="Bgee" id="ENSRNOG00000017503">
    <property type="expression patterns" value="Expressed in testis and 18 other cell types or tissues"/>
</dbReference>
<dbReference type="GO" id="GO:0016592">
    <property type="term" value="C:mediator complex"/>
    <property type="evidence" value="ECO:0000266"/>
    <property type="project" value="RGD"/>
</dbReference>
<dbReference type="GO" id="GO:0005739">
    <property type="term" value="C:mitochondrion"/>
    <property type="evidence" value="ECO:0007669"/>
    <property type="project" value="GOC"/>
</dbReference>
<dbReference type="GO" id="GO:0005634">
    <property type="term" value="C:nucleus"/>
    <property type="evidence" value="ECO:0000250"/>
    <property type="project" value="UniProtKB"/>
</dbReference>
<dbReference type="GO" id="GO:0050682">
    <property type="term" value="F:AF-2 domain binding"/>
    <property type="evidence" value="ECO:0000250"/>
    <property type="project" value="UniProtKB"/>
</dbReference>
<dbReference type="GO" id="GO:0030331">
    <property type="term" value="F:nuclear estrogen receptor binding"/>
    <property type="evidence" value="ECO:0000266"/>
    <property type="project" value="RGD"/>
</dbReference>
<dbReference type="GO" id="GO:0003723">
    <property type="term" value="F:RNA binding"/>
    <property type="evidence" value="ECO:0007669"/>
    <property type="project" value="UniProtKB-KW"/>
</dbReference>
<dbReference type="GO" id="GO:0003713">
    <property type="term" value="F:transcription coactivator activity"/>
    <property type="evidence" value="ECO:0000266"/>
    <property type="project" value="RGD"/>
</dbReference>
<dbReference type="GO" id="GO:0007015">
    <property type="term" value="P:actin filament organization"/>
    <property type="evidence" value="ECO:0000266"/>
    <property type="project" value="RGD"/>
</dbReference>
<dbReference type="GO" id="GO:0060346">
    <property type="term" value="P:bone trabecula formation"/>
    <property type="evidence" value="ECO:0000266"/>
    <property type="project" value="RGD"/>
</dbReference>
<dbReference type="GO" id="GO:0034614">
    <property type="term" value="P:cellular response to reactive oxygen species"/>
    <property type="evidence" value="ECO:0000266"/>
    <property type="project" value="RGD"/>
</dbReference>
<dbReference type="GO" id="GO:0097009">
    <property type="term" value="P:energy homeostasis"/>
    <property type="evidence" value="ECO:0000318"/>
    <property type="project" value="GO_Central"/>
</dbReference>
<dbReference type="GO" id="GO:0030520">
    <property type="term" value="P:estrogen receptor signaling pathway"/>
    <property type="evidence" value="ECO:0000250"/>
    <property type="project" value="UniProtKB"/>
</dbReference>
<dbReference type="GO" id="GO:0006390">
    <property type="term" value="P:mitochondrial transcription"/>
    <property type="evidence" value="ECO:0000266"/>
    <property type="project" value="RGD"/>
</dbReference>
<dbReference type="GO" id="GO:0045892">
    <property type="term" value="P:negative regulation of DNA-templated transcription"/>
    <property type="evidence" value="ECO:0000266"/>
    <property type="project" value="RGD"/>
</dbReference>
<dbReference type="GO" id="GO:0001503">
    <property type="term" value="P:ossification"/>
    <property type="evidence" value="ECO:0000266"/>
    <property type="project" value="RGD"/>
</dbReference>
<dbReference type="GO" id="GO:0045780">
    <property type="term" value="P:positive regulation of bone resorption"/>
    <property type="evidence" value="ECO:0000266"/>
    <property type="project" value="RGD"/>
</dbReference>
<dbReference type="GO" id="GO:0120162">
    <property type="term" value="P:positive regulation of cold-induced thermogenesis"/>
    <property type="evidence" value="ECO:0000250"/>
    <property type="project" value="YuBioLab"/>
</dbReference>
<dbReference type="GO" id="GO:0045893">
    <property type="term" value="P:positive regulation of DNA-templated transcription"/>
    <property type="evidence" value="ECO:0000266"/>
    <property type="project" value="RGD"/>
</dbReference>
<dbReference type="GO" id="GO:0045672">
    <property type="term" value="P:positive regulation of osteoclast differentiation"/>
    <property type="evidence" value="ECO:0000266"/>
    <property type="project" value="RGD"/>
</dbReference>
<dbReference type="GO" id="GO:0042327">
    <property type="term" value="P:positive regulation of phosphorylation"/>
    <property type="evidence" value="ECO:0000266"/>
    <property type="project" value="RGD"/>
</dbReference>
<dbReference type="GO" id="GO:0045944">
    <property type="term" value="P:positive regulation of transcription by RNA polymerase II"/>
    <property type="evidence" value="ECO:0000250"/>
    <property type="project" value="UniProtKB"/>
</dbReference>
<dbReference type="GO" id="GO:0006355">
    <property type="term" value="P:regulation of DNA-templated transcription"/>
    <property type="evidence" value="ECO:0000250"/>
    <property type="project" value="UniProtKB"/>
</dbReference>
<dbReference type="GO" id="GO:0051591">
    <property type="term" value="P:response to cAMP"/>
    <property type="evidence" value="ECO:0000270"/>
    <property type="project" value="RGD"/>
</dbReference>
<dbReference type="GO" id="GO:0051384">
    <property type="term" value="P:response to glucocorticoid"/>
    <property type="evidence" value="ECO:0000270"/>
    <property type="project" value="RGD"/>
</dbReference>
<dbReference type="GO" id="GO:0007584">
    <property type="term" value="P:response to nutrient"/>
    <property type="evidence" value="ECO:0000270"/>
    <property type="project" value="RGD"/>
</dbReference>
<dbReference type="CDD" id="cd12356">
    <property type="entry name" value="RRM_PPARGC1B"/>
    <property type="match status" value="1"/>
</dbReference>
<dbReference type="FunFam" id="3.30.70.330:FF:000353">
    <property type="entry name" value="PPARG coactivator 1 beta"/>
    <property type="match status" value="1"/>
</dbReference>
<dbReference type="Gene3D" id="3.30.70.330">
    <property type="match status" value="1"/>
</dbReference>
<dbReference type="InterPro" id="IPR012677">
    <property type="entry name" value="Nucleotide-bd_a/b_plait_sf"/>
</dbReference>
<dbReference type="InterPro" id="IPR034605">
    <property type="entry name" value="PGC-1"/>
</dbReference>
<dbReference type="InterPro" id="IPR034177">
    <property type="entry name" value="PPARGC1B_RRM"/>
</dbReference>
<dbReference type="InterPro" id="IPR035979">
    <property type="entry name" value="RBD_domain_sf"/>
</dbReference>
<dbReference type="InterPro" id="IPR000504">
    <property type="entry name" value="RRM_dom"/>
</dbReference>
<dbReference type="PANTHER" id="PTHR15528">
    <property type="entry name" value="PEROXISOME PROLIFERATOR ACTIVATED RECEPTOR GAMMA COACTIVATOR 1 PGC-1 -RELATED"/>
    <property type="match status" value="1"/>
</dbReference>
<dbReference type="PANTHER" id="PTHR15528:SF12">
    <property type="entry name" value="PEROXISOME PROLIFERATOR-ACTIVATED RECEPTOR GAMMA COACTIVATOR 1-BETA"/>
    <property type="match status" value="1"/>
</dbReference>
<dbReference type="Pfam" id="PF00076">
    <property type="entry name" value="RRM_1"/>
    <property type="match status" value="1"/>
</dbReference>
<dbReference type="SMART" id="SM00360">
    <property type="entry name" value="RRM"/>
    <property type="match status" value="1"/>
</dbReference>
<dbReference type="SUPFAM" id="SSF54928">
    <property type="entry name" value="RNA-binding domain, RBD"/>
    <property type="match status" value="1"/>
</dbReference>
<dbReference type="PROSITE" id="PS50102">
    <property type="entry name" value="RRM"/>
    <property type="match status" value="1"/>
</dbReference>
<proteinExistence type="evidence at transcript level"/>
<organism>
    <name type="scientific">Rattus norvegicus</name>
    <name type="common">Rat</name>
    <dbReference type="NCBI Taxonomy" id="10116"/>
    <lineage>
        <taxon>Eukaryota</taxon>
        <taxon>Metazoa</taxon>
        <taxon>Chordata</taxon>
        <taxon>Craniata</taxon>
        <taxon>Vertebrata</taxon>
        <taxon>Euteleostomi</taxon>
        <taxon>Mammalia</taxon>
        <taxon>Eutheria</taxon>
        <taxon>Euarchontoglires</taxon>
        <taxon>Glires</taxon>
        <taxon>Rodentia</taxon>
        <taxon>Myomorpha</taxon>
        <taxon>Muroidea</taxon>
        <taxon>Muridae</taxon>
        <taxon>Murinae</taxon>
        <taxon>Rattus</taxon>
    </lineage>
</organism>
<reference key="1">
    <citation type="journal article" date="2003" name="Biochem. J.">
        <title>Characterization of the human, mouse and rat PGC1 beta (peroxisome-proliferator-activated receptor-gamma co-activator 1 beta) gene in vitro and in vivo.</title>
        <authorList>
            <person name="Meirhaeghe A."/>
            <person name="Crowley V."/>
            <person name="Lenaghan C."/>
            <person name="Lelliott C."/>
            <person name="Green K."/>
            <person name="Stewart A."/>
            <person name="Hart K."/>
            <person name="Schinner S."/>
            <person name="Sethi J.K."/>
            <person name="Yeo G."/>
            <person name="Brand M.D."/>
            <person name="Cortright R.N."/>
            <person name="O'Rahilly S."/>
            <person name="Montague C."/>
            <person name="Vidal-Puig A.J."/>
        </authorList>
    </citation>
    <scope>NUCLEOTIDE SEQUENCE [MRNA] (ISOFORM 2)</scope>
    <scope>TISSUE SPECIFICITY</scope>
    <scope>FUNCTION</scope>
</reference>
<reference key="2">
    <citation type="journal article" date="2004" name="Nature">
        <title>Genome sequence of the Brown Norway rat yields insights into mammalian evolution.</title>
        <authorList>
            <person name="Gibbs R.A."/>
            <person name="Weinstock G.M."/>
            <person name="Metzker M.L."/>
            <person name="Muzny D.M."/>
            <person name="Sodergren E.J."/>
            <person name="Scherer S."/>
            <person name="Scott G."/>
            <person name="Steffen D."/>
            <person name="Worley K.C."/>
            <person name="Burch P.E."/>
            <person name="Okwuonu G."/>
            <person name="Hines S."/>
            <person name="Lewis L."/>
            <person name="Deramo C."/>
            <person name="Delgado O."/>
            <person name="Dugan-Rocha S."/>
            <person name="Miner G."/>
            <person name="Morgan M."/>
            <person name="Hawes A."/>
            <person name="Gill R."/>
            <person name="Holt R.A."/>
            <person name="Adams M.D."/>
            <person name="Amanatides P.G."/>
            <person name="Baden-Tillson H."/>
            <person name="Barnstead M."/>
            <person name="Chin S."/>
            <person name="Evans C.A."/>
            <person name="Ferriera S."/>
            <person name="Fosler C."/>
            <person name="Glodek A."/>
            <person name="Gu Z."/>
            <person name="Jennings D."/>
            <person name="Kraft C.L."/>
            <person name="Nguyen T."/>
            <person name="Pfannkoch C.M."/>
            <person name="Sitter C."/>
            <person name="Sutton G.G."/>
            <person name="Venter J.C."/>
            <person name="Woodage T."/>
            <person name="Smith D."/>
            <person name="Lee H.-M."/>
            <person name="Gustafson E."/>
            <person name="Cahill P."/>
            <person name="Kana A."/>
            <person name="Doucette-Stamm L."/>
            <person name="Weinstock K."/>
            <person name="Fechtel K."/>
            <person name="Weiss R.B."/>
            <person name="Dunn D.M."/>
            <person name="Green E.D."/>
            <person name="Blakesley R.W."/>
            <person name="Bouffard G.G."/>
            <person name="De Jong P.J."/>
            <person name="Osoegawa K."/>
            <person name="Zhu B."/>
            <person name="Marra M."/>
            <person name="Schein J."/>
            <person name="Bosdet I."/>
            <person name="Fjell C."/>
            <person name="Jones S."/>
            <person name="Krzywinski M."/>
            <person name="Mathewson C."/>
            <person name="Siddiqui A."/>
            <person name="Wye N."/>
            <person name="McPherson J."/>
            <person name="Zhao S."/>
            <person name="Fraser C.M."/>
            <person name="Shetty J."/>
            <person name="Shatsman S."/>
            <person name="Geer K."/>
            <person name="Chen Y."/>
            <person name="Abramzon S."/>
            <person name="Nierman W.C."/>
            <person name="Havlak P.H."/>
            <person name="Chen R."/>
            <person name="Durbin K.J."/>
            <person name="Egan A."/>
            <person name="Ren Y."/>
            <person name="Song X.-Z."/>
            <person name="Li B."/>
            <person name="Liu Y."/>
            <person name="Qin X."/>
            <person name="Cawley S."/>
            <person name="Cooney A.J."/>
            <person name="D'Souza L.M."/>
            <person name="Martin K."/>
            <person name="Wu J.Q."/>
            <person name="Gonzalez-Garay M.L."/>
            <person name="Jackson A.R."/>
            <person name="Kalafus K.J."/>
            <person name="McLeod M.P."/>
            <person name="Milosavljevic A."/>
            <person name="Virk D."/>
            <person name="Volkov A."/>
            <person name="Wheeler D.A."/>
            <person name="Zhang Z."/>
            <person name="Bailey J.A."/>
            <person name="Eichler E.E."/>
            <person name="Tuzun E."/>
            <person name="Birney E."/>
            <person name="Mongin E."/>
            <person name="Ureta-Vidal A."/>
            <person name="Woodwark C."/>
            <person name="Zdobnov E."/>
            <person name="Bork P."/>
            <person name="Suyama M."/>
            <person name="Torrents D."/>
            <person name="Alexandersson M."/>
            <person name="Trask B.J."/>
            <person name="Young J.M."/>
            <person name="Huang H."/>
            <person name="Wang H."/>
            <person name="Xing H."/>
            <person name="Daniels S."/>
            <person name="Gietzen D."/>
            <person name="Schmidt J."/>
            <person name="Stevens K."/>
            <person name="Vitt U."/>
            <person name="Wingrove J."/>
            <person name="Camara F."/>
            <person name="Mar Alba M."/>
            <person name="Abril J.F."/>
            <person name="Guigo R."/>
            <person name="Smit A."/>
            <person name="Dubchak I."/>
            <person name="Rubin E.M."/>
            <person name="Couronne O."/>
            <person name="Poliakov A."/>
            <person name="Huebner N."/>
            <person name="Ganten D."/>
            <person name="Goesele C."/>
            <person name="Hummel O."/>
            <person name="Kreitler T."/>
            <person name="Lee Y.-A."/>
            <person name="Monti J."/>
            <person name="Schulz H."/>
            <person name="Zimdahl H."/>
            <person name="Himmelbauer H."/>
            <person name="Lehrach H."/>
            <person name="Jacob H.J."/>
            <person name="Bromberg S."/>
            <person name="Gullings-Handley J."/>
            <person name="Jensen-Seaman M.I."/>
            <person name="Kwitek A.E."/>
            <person name="Lazar J."/>
            <person name="Pasko D."/>
            <person name="Tonellato P.J."/>
            <person name="Twigger S."/>
            <person name="Ponting C.P."/>
            <person name="Duarte J.M."/>
            <person name="Rice S."/>
            <person name="Goodstadt L."/>
            <person name="Beatson S.A."/>
            <person name="Emes R.D."/>
            <person name="Winter E.E."/>
            <person name="Webber C."/>
            <person name="Brandt P."/>
            <person name="Nyakatura G."/>
            <person name="Adetobi M."/>
            <person name="Chiaromonte F."/>
            <person name="Elnitski L."/>
            <person name="Eswara P."/>
            <person name="Hardison R.C."/>
            <person name="Hou M."/>
            <person name="Kolbe D."/>
            <person name="Makova K."/>
            <person name="Miller W."/>
            <person name="Nekrutenko A."/>
            <person name="Riemer C."/>
            <person name="Schwartz S."/>
            <person name="Taylor J."/>
            <person name="Yang S."/>
            <person name="Zhang Y."/>
            <person name="Lindpaintner K."/>
            <person name="Andrews T.D."/>
            <person name="Caccamo M."/>
            <person name="Clamp M."/>
            <person name="Clarke L."/>
            <person name="Curwen V."/>
            <person name="Durbin R.M."/>
            <person name="Eyras E."/>
            <person name="Searle S.M."/>
            <person name="Cooper G.M."/>
            <person name="Batzoglou S."/>
            <person name="Brudno M."/>
            <person name="Sidow A."/>
            <person name="Stone E.A."/>
            <person name="Payseur B.A."/>
            <person name="Bourque G."/>
            <person name="Lopez-Otin C."/>
            <person name="Puente X.S."/>
            <person name="Chakrabarti K."/>
            <person name="Chatterji S."/>
            <person name="Dewey C."/>
            <person name="Pachter L."/>
            <person name="Bray N."/>
            <person name="Yap V.B."/>
            <person name="Caspi A."/>
            <person name="Tesler G."/>
            <person name="Pevzner P.A."/>
            <person name="Haussler D."/>
            <person name="Roskin K.M."/>
            <person name="Baertsch R."/>
            <person name="Clawson H."/>
            <person name="Furey T.S."/>
            <person name="Hinrichs A.S."/>
            <person name="Karolchik D."/>
            <person name="Kent W.J."/>
            <person name="Rosenbloom K.R."/>
            <person name="Trumbower H."/>
            <person name="Weirauch M."/>
            <person name="Cooper D.N."/>
            <person name="Stenson P.D."/>
            <person name="Ma B."/>
            <person name="Brent M."/>
            <person name="Arumugam M."/>
            <person name="Shteynberg D."/>
            <person name="Copley R.R."/>
            <person name="Taylor M.S."/>
            <person name="Riethman H."/>
            <person name="Mudunuri U."/>
            <person name="Peterson J."/>
            <person name="Guyer M."/>
            <person name="Felsenfeld A."/>
            <person name="Old S."/>
            <person name="Mockrin S."/>
            <person name="Collins F.S."/>
        </authorList>
    </citation>
    <scope>NUCLEOTIDE SEQUENCE [LARGE SCALE GENOMIC DNA]</scope>
    <scope>ALTERNATIVE SPLICING (ISOFORM 1)</scope>
    <source>
        <strain>Brown Norway</strain>
    </source>
</reference>
<reference key="3">
    <citation type="journal article" date="2003" name="J. Biol. Chem.">
        <title>PGC-1beta in the regulation of hepatic glucose and energy metabolism.</title>
        <authorList>
            <person name="Lin J."/>
            <person name="Tarr P.T."/>
            <person name="Yang R."/>
            <person name="Rhee J."/>
            <person name="Puigserver P."/>
            <person name="Newgard C.B."/>
            <person name="Spiegelman B.M."/>
        </authorList>
    </citation>
    <scope>FUNCTION</scope>
</reference>
<protein>
    <recommendedName>
        <fullName>Peroxisome proliferator-activated receptor gamma coactivator 1-beta</fullName>
        <shortName>PGC-1-beta</shortName>
        <shortName>PPAR-gamma coactivator 1-beta</shortName>
        <shortName>PPARGC-1-beta</shortName>
    </recommendedName>
</protein>
<name>PRGC2_RAT</name>
<feature type="chain" id="PRO_0000240160" description="Peroxisome proliferator-activated receptor gamma coactivator 1-beta">
    <location>
        <begin position="1"/>
        <end position="1010"/>
    </location>
</feature>
<feature type="domain" description="RRM" evidence="4">
    <location>
        <begin position="889"/>
        <end position="963"/>
    </location>
</feature>
<feature type="region of interest" description="Abolishes DNA transcriptional activity when missing" evidence="1">
    <location>
        <begin position="1"/>
        <end position="91"/>
    </location>
</feature>
<feature type="region of interest" description="Disordered" evidence="5">
    <location>
        <begin position="115"/>
        <end position="134"/>
    </location>
</feature>
<feature type="region of interest" description="Disordered" evidence="5">
    <location>
        <begin position="165"/>
        <end position="214"/>
    </location>
</feature>
<feature type="region of interest" description="Disordered" evidence="5">
    <location>
        <begin position="227"/>
        <end position="282"/>
    </location>
</feature>
<feature type="region of interest" description="Disordered" evidence="5">
    <location>
        <begin position="306"/>
        <end position="329"/>
    </location>
</feature>
<feature type="region of interest" description="Disordered" evidence="5">
    <location>
        <begin position="369"/>
        <end position="475"/>
    </location>
</feature>
<feature type="region of interest" description="Disordered" evidence="5">
    <location>
        <begin position="517"/>
        <end position="567"/>
    </location>
</feature>
<feature type="region of interest" description="Disordered" evidence="5">
    <location>
        <begin position="590"/>
        <end position="674"/>
    </location>
</feature>
<feature type="region of interest" description="Disordered" evidence="5">
    <location>
        <begin position="714"/>
        <end position="744"/>
    </location>
</feature>
<feature type="region of interest" description="Disordered" evidence="5">
    <location>
        <begin position="778"/>
        <end position="881"/>
    </location>
</feature>
<feature type="short sequence motif" description="LXXLL motif 1">
    <location>
        <begin position="140"/>
        <end position="144"/>
    </location>
</feature>
<feature type="short sequence motif" description="LXXLL motif 2">
    <location>
        <begin position="156"/>
        <end position="160"/>
    </location>
</feature>
<feature type="short sequence motif" description="LXXLL motif 3">
    <location>
        <begin position="342"/>
        <end position="346"/>
    </location>
</feature>
<feature type="short sequence motif" description="HCFC1-binding-motif (HBM)">
    <location>
        <begin position="681"/>
        <end position="684"/>
    </location>
</feature>
<feature type="compositionally biased region" description="Polar residues" evidence="5">
    <location>
        <begin position="178"/>
        <end position="189"/>
    </location>
</feature>
<feature type="compositionally biased region" description="Polar residues" evidence="5">
    <location>
        <begin position="264"/>
        <end position="279"/>
    </location>
</feature>
<feature type="compositionally biased region" description="Polar residues" evidence="5">
    <location>
        <begin position="369"/>
        <end position="384"/>
    </location>
</feature>
<feature type="compositionally biased region" description="Basic and acidic residues" evidence="5">
    <location>
        <begin position="411"/>
        <end position="428"/>
    </location>
</feature>
<feature type="compositionally biased region" description="Acidic residues" evidence="5">
    <location>
        <begin position="429"/>
        <end position="449"/>
    </location>
</feature>
<feature type="compositionally biased region" description="Low complexity" evidence="5">
    <location>
        <begin position="521"/>
        <end position="532"/>
    </location>
</feature>
<feature type="compositionally biased region" description="Basic and acidic residues" evidence="5">
    <location>
        <begin position="604"/>
        <end position="618"/>
    </location>
</feature>
<feature type="compositionally biased region" description="Polar residues" evidence="5">
    <location>
        <begin position="619"/>
        <end position="638"/>
    </location>
</feature>
<feature type="compositionally biased region" description="Polar residues" evidence="5">
    <location>
        <begin position="659"/>
        <end position="670"/>
    </location>
</feature>
<feature type="compositionally biased region" description="Low complexity" evidence="5">
    <location>
        <begin position="782"/>
        <end position="794"/>
    </location>
</feature>
<feature type="compositionally biased region" description="Acidic residues" evidence="5">
    <location>
        <begin position="795"/>
        <end position="811"/>
    </location>
</feature>
<feature type="compositionally biased region" description="Low complexity" evidence="5">
    <location>
        <begin position="832"/>
        <end position="852"/>
    </location>
</feature>
<feature type="modified residue" description="Phosphoserine" evidence="3">
    <location>
        <position position="145"/>
    </location>
</feature>
<feature type="modified residue" description="Phosphoserine" evidence="3">
    <location>
        <position position="148"/>
    </location>
</feature>
<feature type="modified residue" description="Phosphoserine" evidence="2">
    <location>
        <position position="383"/>
    </location>
</feature>
<feature type="modified residue" description="Phosphoserine" evidence="2">
    <location>
        <position position="628"/>
    </location>
</feature>
<feature type="splice variant" id="VSP_019303" description="In isoform 2." evidence="8">
    <original>MAGNDCGALLDEELSSFFLNYLSDTQ</original>
    <variation>MQGEGK</variation>
    <location>
        <begin position="1"/>
        <end position="26"/>
    </location>
</feature>
<sequence>MAGNDCGALLDEELSSFFLNYLSDTQGGESGEEQLCADLPELDLSQLDASDFDSATCFGELQWCPETSETEPSQYSPDDSEFFQIDSENEALLAALTKTLDDIPEDDVGLAAFPGLDEGDTPSCTPASPAPLSVPPSPALERLLSPVSEVDELSLLQKLLLATSSPTASSDALKDGATWSQTSLSSRSQRPCVKVDGTQDKKTPMLRSQSRPCTELHKHLTSVLPCPRGKACSPPPHPSPQLLSKEDEEVGEDCPSPWPAPASPQDSLGQDTANPNSAQVPKDDVRAMVQLIRYMHTYCLPQRKLPQRASEPIPQSCSSPLRKVPPRSRQTPKAFWTEFSILRELLAQDILCDVSKPYRLATPVYASLTPQSRTRPPKDSQASPAHSAMAEEVRITASPKSTGPRPSLRPLRLEVKRDVNKPARQKREEDEEEEEEEEEEEEKEDEEEEWGRKRPGRGLPWTKLGRKMDSSVCPVRRSRRLNPELGPWLTFTDEPLGALPSMCLATETHDLEEELGGLTDSSQGQQLPLGSQIPTLESPCESGCGDTDEDPSCPRPPSRDSPRCLMLALSQSDPLGKKSFEESLTVELCGTAGLTPPTTPPYKPMEEDPFKQDTKHSPGQDTAPSLPSPETLQLTATPGASHKLPKRHPERSELLSHLQHATTQPVSQAGQKRPFSCSFGDHDYCQVIRPEAALQRKVLRSWEPIKVHLEDLAHQGATLPVETKTPRREADQNCDPTPKDSMQLRDHEIRASLTKHFGLLETALEEEDLASCKSPEYDTVFEDSSSSSGESSFLLEEEEEEGGEEDDEGEDSGVSPPCSDHCPYQSPPSKASRQLCSRSRSSSGSSSCSSWSPATRKNFRLESRGPCSDGTPSARHAKKRREKAIGEGRVVYIRNLSGDMSSRELKKRFEVFGEIVECQVLRRSKRGQKHGFITFRCSEHAALSVRNGATLRKRNEPSFHLSYGGLRHFRWPRYTDYDPTSEESLPSSGKSKYEAMDFDSLLKEAQQSLH</sequence>
<accession>Q811R2</accession>
<keyword id="KW-0010">Activator</keyword>
<keyword id="KW-0025">Alternative splicing</keyword>
<keyword id="KW-0539">Nucleus</keyword>
<keyword id="KW-0597">Phosphoprotein</keyword>
<keyword id="KW-1185">Reference proteome</keyword>
<keyword id="KW-0677">Repeat</keyword>
<keyword id="KW-0694">RNA-binding</keyword>
<keyword id="KW-0804">Transcription</keyword>
<keyword id="KW-0805">Transcription regulation</keyword>
<comment type="function">
    <text evidence="6 7">Plays a role of stimulator of transcription factors and nuclear receptors activities. Activates transcriptional activity of estrogen receptor alpha, nuclear respiratory factor 1 (NRF1) and glucocorticoid receptor in the presence of glucocorticoids. May play a role in constitutive non-adrenergic-mediated mitochondrial biogenesis as suggested by increased basal oxygen consumption and mitochondrial number when overexpressed. May be part of the pathways regulating the elevation of gluconeogenesis, beta-oxidation of fatty acids and ketogenesis during fasting. Stimulates SREBP-mediated lipogenic gene expression in the liver. Induces energy expenditure and antagonizes obesity when overexpressed. Also induces the expression of mitochondrial genes involved in oxidative metabolism. Induces the expression of PERM1 in the skeletal muscle in an ESRRA-dependent manner.</text>
</comment>
<comment type="subunit">
    <text evidence="1">Interacts with estrogen receptor alpha/ESR1. Interacts with Sterol regulatory binding transcription factor 1/SREBF1, PPAR-alpha/PPARA, thyroid hormone receptor beta/THRB and host cell factor/HCFC1. Interacts with Estrogen-related receptor gamma/ESRRG and alpha/ESRRA. Interacts with PRDM16 (By similarity).</text>
</comment>
<comment type="subcellular location">
    <subcellularLocation>
        <location evidence="1">Nucleus</location>
    </subcellularLocation>
</comment>
<comment type="alternative products">
    <event type="alternative splicing"/>
    <isoform>
        <id>Q811R2-1</id>
        <name>1</name>
        <name>PGC1beta-1a</name>
        <sequence type="displayed"/>
    </isoform>
    <isoform>
        <id>Q811R2-2</id>
        <name>2</name>
        <name>PGC1beta-2a</name>
        <sequence type="described" ref="VSP_019303"/>
    </isoform>
</comment>
<comment type="tissue specificity">
    <text evidence="6">Ubiquitous with higher expression in heart, brown adipose tissue.</text>
</comment>
<comment type="induction">
    <text>Induced by combination of forskolin and dexamethasone in primary hepatocytes.</text>
</comment>
<comment type="domain">
    <text evidence="1">Contains 3 Leu-Xaa-Xaa-Leu-Leu (LXXLL) motif, which are usually required for the association with nuclear receptors.</text>
</comment>
<evidence type="ECO:0000250" key="1"/>
<evidence type="ECO:0000250" key="2">
    <source>
        <dbReference type="UniProtKB" id="Q86YN6"/>
    </source>
</evidence>
<evidence type="ECO:0000250" key="3">
    <source>
        <dbReference type="UniProtKB" id="Q8VHJ7"/>
    </source>
</evidence>
<evidence type="ECO:0000255" key="4">
    <source>
        <dbReference type="PROSITE-ProRule" id="PRU00176"/>
    </source>
</evidence>
<evidence type="ECO:0000256" key="5">
    <source>
        <dbReference type="SAM" id="MobiDB-lite"/>
    </source>
</evidence>
<evidence type="ECO:0000269" key="6">
    <source>
    </source>
</evidence>
<evidence type="ECO:0000269" key="7">
    <source>
    </source>
</evidence>
<evidence type="ECO:0000303" key="8">
    <source>
    </source>
</evidence>